<dbReference type="EMBL" id="AE006468">
    <property type="protein sequence ID" value="AAL22512.1"/>
    <property type="molecule type" value="Genomic_DNA"/>
</dbReference>
<dbReference type="RefSeq" id="NP_462553.1">
    <property type="nucleotide sequence ID" value="NC_003197.2"/>
</dbReference>
<dbReference type="RefSeq" id="WP_000965886.1">
    <property type="nucleotide sequence ID" value="NC_003197.2"/>
</dbReference>
<dbReference type="SMR" id="Q8ZL97"/>
<dbReference type="STRING" id="99287.STM3652"/>
<dbReference type="PaxDb" id="99287-STM3652"/>
<dbReference type="GeneID" id="1255176"/>
<dbReference type="KEGG" id="stm:STM3652"/>
<dbReference type="PATRIC" id="fig|99287.12.peg.3863"/>
<dbReference type="HOGENOM" id="CLU_152494_1_1_6"/>
<dbReference type="OMA" id="HFFVNDE"/>
<dbReference type="PhylomeDB" id="Q8ZL97"/>
<dbReference type="BioCyc" id="SENT99287:STM3652-MONOMER"/>
<dbReference type="Proteomes" id="UP000001014">
    <property type="component" value="Chromosome"/>
</dbReference>
<dbReference type="GO" id="GO:0003677">
    <property type="term" value="F:DNA binding"/>
    <property type="evidence" value="ECO:0007669"/>
    <property type="project" value="UniProtKB-KW"/>
</dbReference>
<dbReference type="GO" id="GO:0006355">
    <property type="term" value="P:regulation of DNA-templated transcription"/>
    <property type="evidence" value="ECO:0007669"/>
    <property type="project" value="InterPro"/>
</dbReference>
<dbReference type="Gene3D" id="1.20.5.780">
    <property type="entry name" value="Single helix bin"/>
    <property type="match status" value="1"/>
</dbReference>
<dbReference type="InterPro" id="IPR010985">
    <property type="entry name" value="Ribbon_hlx_hlx"/>
</dbReference>
<dbReference type="InterPro" id="IPR014795">
    <property type="entry name" value="TacA_1-like"/>
</dbReference>
<dbReference type="PANTHER" id="PTHR35401">
    <property type="entry name" value="COPG FAMILY HELIX-TURN-HELIX PROTEIN-RELATED-RELATED"/>
    <property type="match status" value="1"/>
</dbReference>
<dbReference type="PANTHER" id="PTHR35401:SF1">
    <property type="entry name" value="CYTOPLASMIC PROTEIN"/>
    <property type="match status" value="1"/>
</dbReference>
<dbReference type="Pfam" id="PF08681">
    <property type="entry name" value="TacA1"/>
    <property type="match status" value="1"/>
</dbReference>
<dbReference type="SUPFAM" id="SSF47598">
    <property type="entry name" value="Ribbon-helix-helix"/>
    <property type="match status" value="1"/>
</dbReference>
<comment type="function">
    <text evidence="2">Antitoxin component of a type II toxin-antitoxin (TA) system. Counteracts the toxic effect of cognate toxin TacT1. TacT1 is active in complex with its antitoxin, acetylation of this antitoxin upregulates the acetylation of tRNAs by TacT1.</text>
</comment>
<comment type="function">
    <text evidence="2">The TacA1-TacT1 complex represses and probably derepresses expression of its own operon. TacA1-TacT1 complex binds 2 sites in its promoter DNA; neither protein binds DNA alone, it is presumed TacA actually binds DNA.</text>
</comment>
<comment type="subunit">
    <text evidence="1 2">Homodimer (By similarity). Binds to cognate toxin TacT1 as a dimer of dimers (PubMed:28559487).</text>
</comment>
<comment type="induction">
    <text evidence="5">Not highly transcribed in minimal medium, probably autorepressed by the TacA1-TacT1 complex. Part of the probable tacA1-tacT1 operon.</text>
</comment>
<comment type="domain">
    <text evidence="5">The N-terminus is thought to bind DNA (Probable).</text>
</comment>
<comment type="PTM">
    <text evidence="2">Acetylated by TacT1, mostly on Lys-51. Can be deacetylated by NAD-dependent protein deacylase (cobB) in the presence of NAD(+).</text>
</comment>
<comment type="disruption phenotype">
    <text evidence="2">Both tacA1 and tacA1-tacT1 can be deleted without an effect on growth in cell culture; in the absence of tacA1, overexpression of TacT1 causes a long lag phase.</text>
</comment>
<comment type="miscellaneous">
    <text evidence="4">There are 3 TacA-TacT systems in this strain.</text>
</comment>
<comment type="similarity">
    <text evidence="4">Belongs to the TacA antitoxin family.</text>
</comment>
<comment type="caution">
    <text evidence="2">It is uncertain whether Met-1 or Met-8 is the initiator. Upon expression in E.coli and analysis by mass spectrometry, the first 7 residues were not detected, thus the protein may start on Met-8.</text>
</comment>
<protein>
    <recommendedName>
        <fullName evidence="3">Antitoxin TacA 1</fullName>
    </recommendedName>
</protein>
<keyword id="KW-0007">Acetylation</keyword>
<keyword id="KW-0903">Direct protein sequencing</keyword>
<keyword id="KW-0238">DNA-binding</keyword>
<keyword id="KW-1185">Reference proteome</keyword>
<keyword id="KW-0678">Repressor</keyword>
<keyword id="KW-1277">Toxin-antitoxin system</keyword>
<keyword id="KW-0804">Transcription</keyword>
<keyword id="KW-0805">Transcription regulation</keyword>
<organism>
    <name type="scientific">Salmonella typhimurium (strain LT2 / SGSC1412 / ATCC 700720)</name>
    <dbReference type="NCBI Taxonomy" id="99287"/>
    <lineage>
        <taxon>Bacteria</taxon>
        <taxon>Pseudomonadati</taxon>
        <taxon>Pseudomonadota</taxon>
        <taxon>Gammaproteobacteria</taxon>
        <taxon>Enterobacterales</taxon>
        <taxon>Enterobacteriaceae</taxon>
        <taxon>Salmonella</taxon>
    </lineage>
</organism>
<feature type="chain" id="PRO_0000461695" description="Antitoxin TacA 1">
    <location>
        <begin position="1"/>
        <end position="95"/>
    </location>
</feature>
<feature type="modified residue" description="N6-acetyllysine" evidence="2">
    <location>
        <position position="19"/>
    </location>
</feature>
<feature type="modified residue" description="N6-acetyllysine" evidence="2">
    <location>
        <position position="51"/>
    </location>
</feature>
<feature type="modified residue" description="N6-acetyllysine" evidence="2">
    <location>
        <position position="90"/>
    </location>
</feature>
<feature type="mutagenesis site" description="Protein still acetylated in vitro, still forms complex with TacT1." evidence="2">
    <original>K</original>
    <variation>A</variation>
    <location>
        <position position="19"/>
    </location>
</feature>
<feature type="mutagenesis site" description="Protein not acetylated in vitro, still forms complex with TacT1 which does not bind DNA." evidence="2">
    <original>K</original>
    <variation>A</variation>
    <location>
        <position position="51"/>
    </location>
</feature>
<feature type="mutagenesis site" description="Mimics acetylation, severe growth arrest in vivo when induced, increases translation inhibition by TacT1 in vitro, forms complex with TacT1 which only binds 1 DNA site in vitro, no change in tacA1 transcription in vivo." evidence="2">
    <original>K</original>
    <variation>Q</variation>
    <location>
        <position position="51"/>
    </location>
</feature>
<feature type="mutagenesis site" description="Mimics deacetylation, no phenotype in vivo when induced, TacT1 is less efficient at inhibiting translation in vitro, forms complex with TacT which binds DNA normally, no change in tacA1 transcription in vivo." evidence="2">
    <original>K</original>
    <variation>R</variation>
    <location>
        <position position="51"/>
    </location>
</feature>
<feature type="mutagenesis site" description="Protein still acetylated in vitro, forms complex with TacT1 which binds DNA normally." evidence="2">
    <original>K</original>
    <variation>A</variation>
    <location>
        <position position="90"/>
    </location>
</feature>
<accession>Q8ZL97</accession>
<gene>
    <name evidence="3" type="primary">tacA1</name>
    <name evidence="6" type="ordered locus">STM3652</name>
</gene>
<name>TACA1_SALTY</name>
<proteinExistence type="evidence at protein level"/>
<sequence length="95" mass="10951">MLYKGCLMKSDVQLNLRAKESQRALIDAAAEILHKSRTDFILETACQAAEKVILDRRVFNFNDEQYEEFINLLDAPVADDPVIEKLLARKPQWDV</sequence>
<reference evidence="6" key="1">
    <citation type="journal article" date="2001" name="Nature">
        <title>Complete genome sequence of Salmonella enterica serovar Typhimurium LT2.</title>
        <authorList>
            <person name="McClelland M."/>
            <person name="Sanderson K.E."/>
            <person name="Spieth J."/>
            <person name="Clifton S.W."/>
            <person name="Latreille P."/>
            <person name="Courtney L."/>
            <person name="Porwollik S."/>
            <person name="Ali J."/>
            <person name="Dante M."/>
            <person name="Du F."/>
            <person name="Hou S."/>
            <person name="Layman D."/>
            <person name="Leonard S."/>
            <person name="Nguyen C."/>
            <person name="Scott K."/>
            <person name="Holmes A."/>
            <person name="Grewal N."/>
            <person name="Mulvaney E."/>
            <person name="Ryan E."/>
            <person name="Sun H."/>
            <person name="Florea L."/>
            <person name="Miller W."/>
            <person name="Stoneking T."/>
            <person name="Nhan M."/>
            <person name="Waterston R."/>
            <person name="Wilson R.K."/>
        </authorList>
    </citation>
    <scope>NUCLEOTIDE SEQUENCE [LARGE SCALE GENOMIC DNA]</scope>
    <source>
        <strain>LT2 / SGSC1412 / ATCC 700720</strain>
    </source>
</reference>
<reference key="2">
    <citation type="journal article" date="2017" name="MBio">
        <title>A Toxin Involved in Salmonella Persistence Regulates Its Activity by Acetylating Its Cognate Antitoxin, a Modification Reversed by CobB Sirtuin Deacetylase.</title>
        <authorList>
            <person name="VanDrisse C.M."/>
            <person name="Parks A.R."/>
            <person name="Escalante-Semerena J.C."/>
        </authorList>
    </citation>
    <scope>PROTEIN SEQUENCE OF 18-23; 38-56 AND 90-95</scope>
    <scope>FUNCTION AS AN ANTITOXIN</scope>
    <scope>SUBUNIT</scope>
    <scope>PROBABLE OPERON</scope>
    <scope>DOMAIN</scope>
    <scope>ACETYLATION AT LYS-19; LYS-51 AND LYS-90</scope>
    <scope>DISRUPTION PHENOTYPE</scope>
    <scope>PROBABLE DNA-BINDING</scope>
    <scope>MUTAGENESIS OF LYS-19; LYS-51 AND LYS-90</scope>
    <source>
        <strain>LT2 / SGSC1412 / ATCC 700720</strain>
    </source>
</reference>
<evidence type="ECO:0000250" key="1">
    <source>
        <dbReference type="UniProtKB" id="A0A0F6B8D8"/>
    </source>
</evidence>
<evidence type="ECO:0000269" key="2">
    <source>
    </source>
</evidence>
<evidence type="ECO:0000303" key="3">
    <source>
    </source>
</evidence>
<evidence type="ECO:0000305" key="4"/>
<evidence type="ECO:0000305" key="5">
    <source>
    </source>
</evidence>
<evidence type="ECO:0000312" key="6">
    <source>
        <dbReference type="EMBL" id="AAL22512.1"/>
    </source>
</evidence>